<evidence type="ECO:0000269" key="1">
    <source>
    </source>
</evidence>
<evidence type="ECO:0000269" key="2">
    <source>
    </source>
</evidence>
<evidence type="ECO:0000269" key="3">
    <source>
    </source>
</evidence>
<evidence type="ECO:0000269" key="4">
    <source>
    </source>
</evidence>
<evidence type="ECO:0000269" key="5">
    <source>
    </source>
</evidence>
<evidence type="ECO:0000269" key="6">
    <source>
    </source>
</evidence>
<evidence type="ECO:0000269" key="7">
    <source>
    </source>
</evidence>
<evidence type="ECO:0000269" key="8">
    <source>
    </source>
</evidence>
<evidence type="ECO:0000303" key="9">
    <source>
    </source>
</evidence>
<evidence type="ECO:0000303" key="10">
    <source>
    </source>
</evidence>
<evidence type="ECO:0000305" key="11"/>
<evidence type="ECO:0000312" key="12">
    <source>
        <dbReference type="EMBL" id="AAL13803.1"/>
    </source>
</evidence>
<evidence type="ECO:0000312" key="13">
    <source>
        <dbReference type="FlyBase" id="FBgn0036570"/>
    </source>
</evidence>
<evidence type="ECO:0000312" key="14">
    <source>
        <dbReference type="Proteomes" id="UP000000803"/>
    </source>
</evidence>
<evidence type="ECO:0007744" key="15">
    <source>
        <dbReference type="PDB" id="7SN8"/>
    </source>
</evidence>
<evidence type="ECO:0007829" key="16">
    <source>
        <dbReference type="PDB" id="7SN8"/>
    </source>
</evidence>
<protein>
    <recommendedName>
        <fullName evidence="9">Integrator complex subunit 9</fullName>
    </recommendedName>
</protein>
<reference evidence="14" key="1">
    <citation type="journal article" date="2000" name="Science">
        <title>The genome sequence of Drosophila melanogaster.</title>
        <authorList>
            <person name="Adams M.D."/>
            <person name="Celniker S.E."/>
            <person name="Holt R.A."/>
            <person name="Evans C.A."/>
            <person name="Gocayne J.D."/>
            <person name="Amanatides P.G."/>
            <person name="Scherer S.E."/>
            <person name="Li P.W."/>
            <person name="Hoskins R.A."/>
            <person name="Galle R.F."/>
            <person name="George R.A."/>
            <person name="Lewis S.E."/>
            <person name="Richards S."/>
            <person name="Ashburner M."/>
            <person name="Henderson S.N."/>
            <person name="Sutton G.G."/>
            <person name="Wortman J.R."/>
            <person name="Yandell M.D."/>
            <person name="Zhang Q."/>
            <person name="Chen L.X."/>
            <person name="Brandon R.C."/>
            <person name="Rogers Y.-H.C."/>
            <person name="Blazej R.G."/>
            <person name="Champe M."/>
            <person name="Pfeiffer B.D."/>
            <person name="Wan K.H."/>
            <person name="Doyle C."/>
            <person name="Baxter E.G."/>
            <person name="Helt G."/>
            <person name="Nelson C.R."/>
            <person name="Miklos G.L.G."/>
            <person name="Abril J.F."/>
            <person name="Agbayani A."/>
            <person name="An H.-J."/>
            <person name="Andrews-Pfannkoch C."/>
            <person name="Baldwin D."/>
            <person name="Ballew R.M."/>
            <person name="Basu A."/>
            <person name="Baxendale J."/>
            <person name="Bayraktaroglu L."/>
            <person name="Beasley E.M."/>
            <person name="Beeson K.Y."/>
            <person name="Benos P.V."/>
            <person name="Berman B.P."/>
            <person name="Bhandari D."/>
            <person name="Bolshakov S."/>
            <person name="Borkova D."/>
            <person name="Botchan M.R."/>
            <person name="Bouck J."/>
            <person name="Brokstein P."/>
            <person name="Brottier P."/>
            <person name="Burtis K.C."/>
            <person name="Busam D.A."/>
            <person name="Butler H."/>
            <person name="Cadieu E."/>
            <person name="Center A."/>
            <person name="Chandra I."/>
            <person name="Cherry J.M."/>
            <person name="Cawley S."/>
            <person name="Dahlke C."/>
            <person name="Davenport L.B."/>
            <person name="Davies P."/>
            <person name="de Pablos B."/>
            <person name="Delcher A."/>
            <person name="Deng Z."/>
            <person name="Mays A.D."/>
            <person name="Dew I."/>
            <person name="Dietz S.M."/>
            <person name="Dodson K."/>
            <person name="Doup L.E."/>
            <person name="Downes M."/>
            <person name="Dugan-Rocha S."/>
            <person name="Dunkov B.C."/>
            <person name="Dunn P."/>
            <person name="Durbin K.J."/>
            <person name="Evangelista C.C."/>
            <person name="Ferraz C."/>
            <person name="Ferriera S."/>
            <person name="Fleischmann W."/>
            <person name="Fosler C."/>
            <person name="Gabrielian A.E."/>
            <person name="Garg N.S."/>
            <person name="Gelbart W.M."/>
            <person name="Glasser K."/>
            <person name="Glodek A."/>
            <person name="Gong F."/>
            <person name="Gorrell J.H."/>
            <person name="Gu Z."/>
            <person name="Guan P."/>
            <person name="Harris M."/>
            <person name="Harris N.L."/>
            <person name="Harvey D.A."/>
            <person name="Heiman T.J."/>
            <person name="Hernandez J.R."/>
            <person name="Houck J."/>
            <person name="Hostin D."/>
            <person name="Houston K.A."/>
            <person name="Howland T.J."/>
            <person name="Wei M.-H."/>
            <person name="Ibegwam C."/>
            <person name="Jalali M."/>
            <person name="Kalush F."/>
            <person name="Karpen G.H."/>
            <person name="Ke Z."/>
            <person name="Kennison J.A."/>
            <person name="Ketchum K.A."/>
            <person name="Kimmel B.E."/>
            <person name="Kodira C.D."/>
            <person name="Kraft C.L."/>
            <person name="Kravitz S."/>
            <person name="Kulp D."/>
            <person name="Lai Z."/>
            <person name="Lasko P."/>
            <person name="Lei Y."/>
            <person name="Levitsky A.A."/>
            <person name="Li J.H."/>
            <person name="Li Z."/>
            <person name="Liang Y."/>
            <person name="Lin X."/>
            <person name="Liu X."/>
            <person name="Mattei B."/>
            <person name="McIntosh T.C."/>
            <person name="McLeod M.P."/>
            <person name="McPherson D."/>
            <person name="Merkulov G."/>
            <person name="Milshina N.V."/>
            <person name="Mobarry C."/>
            <person name="Morris J."/>
            <person name="Moshrefi A."/>
            <person name="Mount S.M."/>
            <person name="Moy M."/>
            <person name="Murphy B."/>
            <person name="Murphy L."/>
            <person name="Muzny D.M."/>
            <person name="Nelson D.L."/>
            <person name="Nelson D.R."/>
            <person name="Nelson K.A."/>
            <person name="Nixon K."/>
            <person name="Nusskern D.R."/>
            <person name="Pacleb J.M."/>
            <person name="Palazzolo M."/>
            <person name="Pittman G.S."/>
            <person name="Pan S."/>
            <person name="Pollard J."/>
            <person name="Puri V."/>
            <person name="Reese M.G."/>
            <person name="Reinert K."/>
            <person name="Remington K."/>
            <person name="Saunders R.D.C."/>
            <person name="Scheeler F."/>
            <person name="Shen H."/>
            <person name="Shue B.C."/>
            <person name="Siden-Kiamos I."/>
            <person name="Simpson M."/>
            <person name="Skupski M.P."/>
            <person name="Smith T.J."/>
            <person name="Spier E."/>
            <person name="Spradling A.C."/>
            <person name="Stapleton M."/>
            <person name="Strong R."/>
            <person name="Sun E."/>
            <person name="Svirskas R."/>
            <person name="Tector C."/>
            <person name="Turner R."/>
            <person name="Venter E."/>
            <person name="Wang A.H."/>
            <person name="Wang X."/>
            <person name="Wang Z.-Y."/>
            <person name="Wassarman D.A."/>
            <person name="Weinstock G.M."/>
            <person name="Weissenbach J."/>
            <person name="Williams S.M."/>
            <person name="Woodage T."/>
            <person name="Worley K.C."/>
            <person name="Wu D."/>
            <person name="Yang S."/>
            <person name="Yao Q.A."/>
            <person name="Ye J."/>
            <person name="Yeh R.-F."/>
            <person name="Zaveri J.S."/>
            <person name="Zhan M."/>
            <person name="Zhang G."/>
            <person name="Zhao Q."/>
            <person name="Zheng L."/>
            <person name="Zheng X.H."/>
            <person name="Zhong F.N."/>
            <person name="Zhong W."/>
            <person name="Zhou X."/>
            <person name="Zhu S.C."/>
            <person name="Zhu X."/>
            <person name="Smith H.O."/>
            <person name="Gibbs R.A."/>
            <person name="Myers E.W."/>
            <person name="Rubin G.M."/>
            <person name="Venter J.C."/>
        </authorList>
    </citation>
    <scope>NUCLEOTIDE SEQUENCE [LARGE SCALE GENOMIC DNA]</scope>
    <source>
        <strain evidence="14">Berkeley</strain>
    </source>
</reference>
<reference evidence="14" key="2">
    <citation type="journal article" date="2002" name="Genome Biol.">
        <title>Annotation of the Drosophila melanogaster euchromatic genome: a systematic review.</title>
        <authorList>
            <person name="Misra S."/>
            <person name="Crosby M.A."/>
            <person name="Mungall C.J."/>
            <person name="Matthews B.B."/>
            <person name="Campbell K.S."/>
            <person name="Hradecky P."/>
            <person name="Huang Y."/>
            <person name="Kaminker J.S."/>
            <person name="Millburn G.H."/>
            <person name="Prochnik S.E."/>
            <person name="Smith C.D."/>
            <person name="Tupy J.L."/>
            <person name="Whitfield E.J."/>
            <person name="Bayraktaroglu L."/>
            <person name="Berman B.P."/>
            <person name="Bettencourt B.R."/>
            <person name="Celniker S.E."/>
            <person name="de Grey A.D.N.J."/>
            <person name="Drysdale R.A."/>
            <person name="Harris N.L."/>
            <person name="Richter J."/>
            <person name="Russo S."/>
            <person name="Schroeder A.J."/>
            <person name="Shu S.Q."/>
            <person name="Stapleton M."/>
            <person name="Yamada C."/>
            <person name="Ashburner M."/>
            <person name="Gelbart W.M."/>
            <person name="Rubin G.M."/>
            <person name="Lewis S.E."/>
        </authorList>
    </citation>
    <scope>GENOME REANNOTATION</scope>
    <source>
        <strain evidence="14">Berkeley</strain>
    </source>
</reference>
<reference evidence="12" key="3">
    <citation type="journal article" date="2002" name="Genome Biol.">
        <title>A Drosophila full-length cDNA resource.</title>
        <authorList>
            <person name="Stapleton M."/>
            <person name="Carlson J.W."/>
            <person name="Brokstein P."/>
            <person name="Yu C."/>
            <person name="Champe M."/>
            <person name="George R.A."/>
            <person name="Guarin H."/>
            <person name="Kronmiller B."/>
            <person name="Pacleb J.M."/>
            <person name="Park S."/>
            <person name="Wan K.H."/>
            <person name="Rubin G.M."/>
            <person name="Celniker S.E."/>
        </authorList>
    </citation>
    <scope>NUCLEOTIDE SEQUENCE [LARGE SCALE MRNA]</scope>
    <source>
        <strain evidence="12">Berkeley</strain>
        <tissue evidence="12">Embryo</tissue>
    </source>
</reference>
<reference evidence="11" key="4">
    <citation type="journal article" date="2011" name="Mol. Cell. Biol.">
        <title>A subset of Drosophila integrator proteins is essential for efficient U7 snRNA and spliceosomal snRNA 3'-end formation.</title>
        <authorList>
            <person name="Ezzeddine N."/>
            <person name="Chen J."/>
            <person name="Waltenspiel B."/>
            <person name="Burch B."/>
            <person name="Albrecht T."/>
            <person name="Zhuo M."/>
            <person name="Warren W.D."/>
            <person name="Marzluff W.F."/>
            <person name="Wagner E.J."/>
        </authorList>
    </citation>
    <scope>FUNCTION</scope>
</reference>
<reference evidence="11" key="5">
    <citation type="journal article" date="2013" name="J. Biol. Chem.">
        <title>Functional analysis of the integrator subunit 12 identifies a microdomain that mediates activation of the Drosophila integrator complex.</title>
        <authorList>
            <person name="Chen J."/>
            <person name="Waltenspiel B."/>
            <person name="Warren W.D."/>
            <person name="Wagner E.J."/>
        </authorList>
    </citation>
    <scope>SUBCELLULAR LOCATION</scope>
    <scope>INTERACTION WITH INTS1 AND INTS12</scope>
</reference>
<reference evidence="11" key="6">
    <citation type="journal article" date="2012" name="RNA">
        <title>An RNAi screen identifies additional members of the Drosophila Integrator complex and a requirement for cyclin C/Cdk8 in snRNA 3'-end formation.</title>
        <authorList>
            <person name="Chen J."/>
            <person name="Ezzeddine N."/>
            <person name="Waltenspiel B."/>
            <person name="Albrecht T.R."/>
            <person name="Warren W.D."/>
            <person name="Marzluff W.F."/>
            <person name="Wagner E.J."/>
        </authorList>
    </citation>
    <scope>FUNCTION</scope>
    <scope>SUBUNIT</scope>
</reference>
<reference key="7">
    <citation type="journal article" date="2019" name="Genes Dev.">
        <title>The Integrator complex cleaves nascent mRNAs to attenuate transcription.</title>
        <authorList>
            <person name="Tatomer D.C."/>
            <person name="Elrod N.D."/>
            <person name="Liang D."/>
            <person name="Xiao M.S."/>
            <person name="Jiang J.Z."/>
            <person name="Jonathan M."/>
            <person name="Huang K.L."/>
            <person name="Wagner E.J."/>
            <person name="Cherry S."/>
            <person name="Wilusz J.E."/>
        </authorList>
    </citation>
    <scope>IDENTIFICATION IN THE INTEGRATOR COMPLEX</scope>
</reference>
<reference key="8">
    <citation type="journal article" date="2019" name="Mol. Cell">
        <title>The Integrator complex attenuates promoter-proximal transcription at protein-coding genes.</title>
        <authorList>
            <person name="Elrod N.D."/>
            <person name="Henriques T."/>
            <person name="Huang K.L."/>
            <person name="Tatomer D.C."/>
            <person name="Wilusz J.E."/>
            <person name="Wagner E.J."/>
            <person name="Adelman K."/>
        </authorList>
    </citation>
    <scope>FUNCTION</scope>
    <scope>IDENTIFICATION IN THE INTEGRATOR COMPLEX</scope>
</reference>
<reference key="9">
    <citation type="journal article" date="2020" name="Mol. Cell">
        <title>Integrator recruits protein phosphatase 2A to prevent pause release and facilitate transcription termination.</title>
        <authorList>
            <person name="Huang K.L."/>
            <person name="Jee D."/>
            <person name="Stein C.B."/>
            <person name="Elrod N.D."/>
            <person name="Henriques T."/>
            <person name="Mascibroda L.G."/>
            <person name="Baillat D."/>
            <person name="Russell W.K."/>
            <person name="Adelman K."/>
            <person name="Wagner E.J."/>
        </authorList>
    </citation>
    <scope>FUNCTION</scope>
    <scope>IDENTIFICATION IN THE INTAC COMPLEX</scope>
</reference>
<reference key="10">
    <citation type="journal article" date="2023" name="Mol. Cell">
        <title>IntS6 and the Integrator phosphatase module tune the efficiency of select premature transcription termination events.</title>
        <authorList>
            <person name="Fujiwara R."/>
            <person name="Zhai S.N."/>
            <person name="Liang D."/>
            <person name="Shah A.P."/>
            <person name="Tracey M."/>
            <person name="Ma X.K."/>
            <person name="Fields C.J."/>
            <person name="Mendoza-Figueroa M.S."/>
            <person name="Meline M.C."/>
            <person name="Tatomer D.C."/>
            <person name="Yang L."/>
            <person name="Wilusz J.E."/>
        </authorList>
    </citation>
    <scope>IDENTIFICATION IN THE INTAC COMPLEX</scope>
</reference>
<reference key="11">
    <citation type="journal article" date="2024" name="Mol. Cell">
        <title>Cytoplasmic binding partners of the Integrator endonuclease INTS11 and its paralog CPSF73 are required for their nuclear function.</title>
        <authorList>
            <person name="Lin M.H."/>
            <person name="Jensen M.K."/>
            <person name="Elrod N.D."/>
            <person name="Chu H.F."/>
            <person name="Haseley M."/>
            <person name="Beam A.C."/>
            <person name="Huang K.L."/>
            <person name="Chiang W."/>
            <person name="Russell W.K."/>
            <person name="Williams K."/>
            <person name="Proschel C."/>
            <person name="Wagner E.J."/>
            <person name="Tong L."/>
        </authorList>
    </citation>
    <scope>IDENTIFICATION IN THE INTEGRATOR COMPLEX</scope>
    <scope>SUBCELLULAR LOCATION</scope>
</reference>
<reference evidence="15" key="12">
    <citation type="journal article" date="2022" name="Nat. Commun.">
        <title>Inositol hexakisphosphate is required for Integrator function.</title>
        <authorList>
            <person name="Lin M.H."/>
            <person name="Jensen M.K."/>
            <person name="Elrod N.D."/>
            <person name="Huang K.L."/>
            <person name="Welle K.A."/>
            <person name="Wagner E.J."/>
            <person name="Tong L."/>
        </authorList>
    </citation>
    <scope>STRUCTURE BY ELECTRON MICROSCOPY (2.74 ANGSTROMS) IN COMPLEX WITH INOSITOL HEXAKISPHOSPHATE; INTS4 AND INTS9</scope>
    <scope>IDENTIFICATION IN THE INTEGRATOR COMPLEX</scope>
    <scope>SUBCELLULAR LOCATION</scope>
    <scope>MUTAGENESIS OF 504-ARG--ARG-509</scope>
</reference>
<proteinExistence type="evidence at protein level"/>
<comment type="function">
    <text evidence="1 2 5">Component of the integrator complex, a multiprotein complex that terminates RNA polymerase II (Pol II) transcription in the promoter-proximal region of genes (PubMed:21078872, PubMed:23097424, PubMed:32966759). The integrator complex provides a quality checkpoint during transcription elongation by driving premature transcription termination of transcripts that are unfavorably configured for transcriptional elongation: the complex terminates transcription by (1) catalyzing dephosphorylation of the C-terminal domain (CTD) of Pol II subunit Polr2A/Rbp1 and Spt5, and (2) degrading the exiting nascent RNA transcript via endonuclease activity (PubMed:32966759). The integrator complex is also involved in the 3'-end processing of the U7 snRNA, and also the spliceosomal snRNAs U1, U2, U4 and U5 (PubMed:21078872, PubMed:23097424).</text>
</comment>
<comment type="subunit">
    <text evidence="2 3 4 5 6 7 8">Belongs to the multiprotein complex Integrator, at least composed of IntS1, IntS2, IntS3, IntS4, omd/IntS5, IntS6, defl/IntS7, IntS8, IntS9, IntS10, IntS11, IntS12, asun/IntS13, IntS14 and IntS15 (PubMed:23097424, PubMed:31530651, PubMed:32966759, PubMed:37995689, PubMed:39032490). The core complex associates with protein phosphatase 2A subunits mts/PP2A and Pp2A-29B, to form the Integrator-PP2A (INTAC) complex (PubMed:32966759, PubMed:37995689). Within the complex, interacts with IntS1 and IntS12 (PubMed:23288851). IntS9 is part of the RNA endonuclease subcomplex, composed of IntS4, IntS9, IntS11 and inositol hexakisphosphate (InsP6) (PubMed:36180473).</text>
</comment>
<comment type="interaction">
    <interactant intactId="EBI-91372">
        <id>Q95TS5</id>
    </interactant>
    <interactant intactId="EBI-3425361">
        <id>Q9VAH9</id>
        <label>IntS11</label>
    </interactant>
    <organismsDiffer>false</organismsDiffer>
    <experiments>8</experiments>
</comment>
<comment type="subcellular location">
    <subcellularLocation>
        <location evidence="3 8">Nucleus</location>
    </subcellularLocation>
    <subcellularLocation>
        <location evidence="8">Cytoplasm</location>
        <location evidence="8">Cytosol</location>
    </subcellularLocation>
</comment>
<comment type="similarity">
    <text evidence="11">Belongs to the metallo-beta-lactamase superfamily. RNA-metabolizing metallo-beta-lactamase-like family. INTS9 subfamily.</text>
</comment>
<feature type="chain" id="PRO_0000437661" description="Integrator complex subunit 9">
    <location>
        <begin position="1"/>
        <end position="654"/>
    </location>
</feature>
<feature type="binding site" evidence="6 15">
    <location>
        <position position="1"/>
    </location>
    <ligand>
        <name>1D-myo-inositol hexakisphosphate</name>
        <dbReference type="ChEBI" id="CHEBI:58130"/>
    </ligand>
</feature>
<feature type="binding site" evidence="6 15">
    <location>
        <position position="2"/>
    </location>
    <ligand>
        <name>1D-myo-inositol hexakisphosphate</name>
        <dbReference type="ChEBI" id="CHEBI:58130"/>
    </ligand>
</feature>
<feature type="binding site" evidence="6 15">
    <location>
        <position position="18"/>
    </location>
    <ligand>
        <name>1D-myo-inositol hexakisphosphate</name>
        <dbReference type="ChEBI" id="CHEBI:58130"/>
    </ligand>
</feature>
<feature type="binding site" evidence="6 15">
    <location>
        <position position="19"/>
    </location>
    <ligand>
        <name>1D-myo-inositol hexakisphosphate</name>
        <dbReference type="ChEBI" id="CHEBI:58130"/>
    </ligand>
</feature>
<feature type="binding site" evidence="6 15">
    <location>
        <position position="504"/>
    </location>
    <ligand>
        <name>1D-myo-inositol hexakisphosphate</name>
        <dbReference type="ChEBI" id="CHEBI:58130"/>
    </ligand>
</feature>
<feature type="binding site" evidence="6 15">
    <location>
        <position position="508"/>
    </location>
    <ligand>
        <name>1D-myo-inositol hexakisphosphate</name>
        <dbReference type="ChEBI" id="CHEBI:58130"/>
    </ligand>
</feature>
<feature type="binding site" evidence="6 15">
    <location>
        <position position="509"/>
    </location>
    <ligand>
        <name>1D-myo-inositol hexakisphosphate</name>
        <dbReference type="ChEBI" id="CHEBI:58130"/>
    </ligand>
</feature>
<feature type="mutagenesis site" description="Abolished interaction with Inositol hexakisphosphate leading to impaired integrator complex function." evidence="6">
    <original>RLPLKR</original>
    <variation>ELPLEE</variation>
    <location>
        <begin position="504"/>
        <end position="509"/>
    </location>
</feature>
<feature type="strand" evidence="16">
    <location>
        <begin position="3"/>
        <end position="5"/>
    </location>
</feature>
<feature type="strand" evidence="16">
    <location>
        <begin position="10"/>
        <end position="12"/>
    </location>
</feature>
<feature type="strand" evidence="16">
    <location>
        <begin position="15"/>
        <end position="21"/>
    </location>
</feature>
<feature type="strand" evidence="16">
    <location>
        <begin position="23"/>
        <end position="26"/>
    </location>
</feature>
<feature type="helix" evidence="16">
    <location>
        <begin position="32"/>
        <end position="37"/>
    </location>
</feature>
<feature type="strand" evidence="16">
    <location>
        <begin position="49"/>
        <end position="51"/>
    </location>
</feature>
<feature type="turn" evidence="16">
    <location>
        <begin position="63"/>
        <end position="65"/>
    </location>
</feature>
<feature type="strand" evidence="16">
    <location>
        <begin position="69"/>
        <end position="71"/>
    </location>
</feature>
<feature type="strand" evidence="16">
    <location>
        <begin position="76"/>
        <end position="78"/>
    </location>
</feature>
<feature type="strand" evidence="16">
    <location>
        <begin position="89"/>
        <end position="92"/>
    </location>
</feature>
<feature type="strand" evidence="16">
    <location>
        <begin position="94"/>
        <end position="96"/>
    </location>
</feature>
<feature type="strand" evidence="16">
    <location>
        <begin position="99"/>
        <end position="101"/>
    </location>
</feature>
<feature type="helix" evidence="16">
    <location>
        <begin position="106"/>
        <end position="108"/>
    </location>
</feature>
<feature type="helix" evidence="16">
    <location>
        <begin position="111"/>
        <end position="115"/>
    </location>
</feature>
<feature type="strand" evidence="16">
    <location>
        <begin position="116"/>
        <end position="119"/>
    </location>
</feature>
<feature type="strand" evidence="16">
    <location>
        <begin position="122"/>
        <end position="127"/>
    </location>
</feature>
<feature type="helix" evidence="16">
    <location>
        <begin position="128"/>
        <end position="147"/>
    </location>
</feature>
<feature type="turn" evidence="16">
    <location>
        <begin position="156"/>
        <end position="159"/>
    </location>
</feature>
<feature type="strand" evidence="16">
    <location>
        <begin position="162"/>
        <end position="164"/>
    </location>
</feature>
<feature type="turn" evidence="16">
    <location>
        <begin position="166"/>
        <end position="170"/>
    </location>
</feature>
<feature type="helix" evidence="16">
    <location>
        <begin position="183"/>
        <end position="190"/>
    </location>
</feature>
<feature type="strand" evidence="16">
    <location>
        <begin position="193"/>
        <end position="196"/>
    </location>
</feature>
<feature type="strand" evidence="16">
    <location>
        <begin position="202"/>
        <end position="204"/>
    </location>
</feature>
<feature type="turn" evidence="16">
    <location>
        <begin position="205"/>
        <end position="207"/>
    </location>
</feature>
<feature type="strand" evidence="16">
    <location>
        <begin position="208"/>
        <end position="212"/>
    </location>
</feature>
<feature type="strand" evidence="16">
    <location>
        <begin position="224"/>
        <end position="227"/>
    </location>
</feature>
<feature type="strand" evidence="16">
    <location>
        <begin position="232"/>
        <end position="236"/>
    </location>
</feature>
<feature type="helix" evidence="16">
    <location>
        <begin position="252"/>
        <end position="254"/>
    </location>
</feature>
<feature type="strand" evidence="16">
    <location>
        <begin position="258"/>
        <end position="262"/>
    </location>
</feature>
<feature type="helix" evidence="16">
    <location>
        <begin position="273"/>
        <end position="289"/>
    </location>
</feature>
<feature type="strand" evidence="16">
    <location>
        <begin position="294"/>
        <end position="296"/>
    </location>
</feature>
<feature type="helix" evidence="16">
    <location>
        <begin position="304"/>
        <end position="317"/>
    </location>
</feature>
<feature type="strand" evidence="16">
    <location>
        <begin position="325"/>
        <end position="328"/>
    </location>
</feature>
<feature type="helix" evidence="16">
    <location>
        <begin position="332"/>
        <end position="339"/>
    </location>
</feature>
<feature type="helix" evidence="16">
    <location>
        <begin position="343"/>
        <end position="345"/>
    </location>
</feature>
<feature type="helix" evidence="16">
    <location>
        <begin position="348"/>
        <end position="351"/>
    </location>
</feature>
<feature type="helix" evidence="16">
    <location>
        <begin position="352"/>
        <end position="354"/>
    </location>
</feature>
<feature type="turn" evidence="16">
    <location>
        <begin position="355"/>
        <end position="357"/>
    </location>
</feature>
<feature type="helix" evidence="16">
    <location>
        <begin position="363"/>
        <end position="368"/>
    </location>
</feature>
<feature type="strand" evidence="16">
    <location>
        <begin position="371"/>
        <end position="376"/>
    </location>
</feature>
<feature type="helix" evidence="16">
    <location>
        <begin position="383"/>
        <end position="386"/>
    </location>
</feature>
<feature type="strand" evidence="16">
    <location>
        <begin position="392"/>
        <end position="394"/>
    </location>
</feature>
<feature type="strand" evidence="16">
    <location>
        <begin position="400"/>
        <end position="403"/>
    </location>
</feature>
<feature type="helix" evidence="16">
    <location>
        <begin position="404"/>
        <end position="411"/>
    </location>
</feature>
<feature type="helix" evidence="16">
    <location>
        <begin position="429"/>
        <end position="432"/>
    </location>
</feature>
<feature type="helix" evidence="16">
    <location>
        <begin position="434"/>
        <end position="436"/>
    </location>
</feature>
<feature type="helix" evidence="16">
    <location>
        <begin position="454"/>
        <end position="464"/>
    </location>
</feature>
<feature type="strand" evidence="16">
    <location>
        <begin position="467"/>
        <end position="472"/>
    </location>
</feature>
<feature type="turn" evidence="16">
    <location>
        <begin position="473"/>
        <end position="475"/>
    </location>
</feature>
<feature type="strand" evidence="16">
    <location>
        <begin position="492"/>
        <end position="497"/>
    </location>
</feature>
<feature type="strand" evidence="16">
    <location>
        <begin position="511"/>
        <end position="516"/>
    </location>
</feature>
<feature type="helix" evidence="16">
    <location>
        <begin position="518"/>
        <end position="522"/>
    </location>
</feature>
<feature type="strand" evidence="16">
    <location>
        <begin position="530"/>
        <end position="532"/>
    </location>
</feature>
<feature type="strand" evidence="16">
    <location>
        <begin position="534"/>
        <end position="539"/>
    </location>
</feature>
<feature type="turn" evidence="16">
    <location>
        <begin position="545"/>
        <end position="547"/>
    </location>
</feature>
<feature type="helix" evidence="16">
    <location>
        <begin position="575"/>
        <end position="577"/>
    </location>
</feature>
<feature type="strand" evidence="16">
    <location>
        <begin position="581"/>
        <end position="583"/>
    </location>
</feature>
<feature type="helix" evidence="16">
    <location>
        <begin position="590"/>
        <end position="594"/>
    </location>
</feature>
<feature type="turn" evidence="16">
    <location>
        <begin position="595"/>
        <end position="598"/>
    </location>
</feature>
<feature type="strand" evidence="16">
    <location>
        <begin position="603"/>
        <end position="607"/>
    </location>
</feature>
<feature type="strand" evidence="16">
    <location>
        <begin position="610"/>
        <end position="615"/>
    </location>
</feature>
<feature type="turn" evidence="16">
    <location>
        <begin position="616"/>
        <end position="619"/>
    </location>
</feature>
<feature type="strand" evidence="16">
    <location>
        <begin position="620"/>
        <end position="624"/>
    </location>
</feature>
<feature type="strand" evidence="16">
    <location>
        <begin position="629"/>
        <end position="631"/>
    </location>
</feature>
<feature type="helix" evidence="16">
    <location>
        <begin position="637"/>
        <end position="649"/>
    </location>
</feature>
<feature type="strand" evidence="16">
    <location>
        <begin position="651"/>
        <end position="653"/>
    </location>
</feature>
<gene>
    <name evidence="10 13" type="primary">IntS9</name>
    <name evidence="13" type="ORF">CG5222</name>
</gene>
<name>INT9_DROME</name>
<organism evidence="12">
    <name type="scientific">Drosophila melanogaster</name>
    <name type="common">Fruit fly</name>
    <dbReference type="NCBI Taxonomy" id="7227"/>
    <lineage>
        <taxon>Eukaryota</taxon>
        <taxon>Metazoa</taxon>
        <taxon>Ecdysozoa</taxon>
        <taxon>Arthropoda</taxon>
        <taxon>Hexapoda</taxon>
        <taxon>Insecta</taxon>
        <taxon>Pterygota</taxon>
        <taxon>Neoptera</taxon>
        <taxon>Endopterygota</taxon>
        <taxon>Diptera</taxon>
        <taxon>Brachycera</taxon>
        <taxon>Muscomorpha</taxon>
        <taxon>Ephydroidea</taxon>
        <taxon>Drosophilidae</taxon>
        <taxon>Drosophila</taxon>
        <taxon>Sophophora</taxon>
    </lineage>
</organism>
<accession>Q95TS5</accession>
<accession>Q9VUY5</accession>
<sequence>MRLYCLSGDLAKPCYIITFKGLRIMLDCGLTEQTVLNFLPLPFVQSLKWSNLPNFVPSRDHDPQMDGELKDCCGRVFVDSTPEFNLPMDKMLDFSEVDVILISNYLNMLALPYITENTGFKGKVYATEPTLQIGRFFLEELVDYIEVSPKACTARLWKEKLHLLPSPLSEAFRAKKWRTIFSLKDVQGSLSKVTIMGYDEKLDILGAFIATPVSSGYCLGSSNWVLSTAHEKICYVSGSSTLTTHPRPINQSALKHADVLIMTGLTQAPTVNPDTKLGELCMNVALTIRNNGSALIPCYPSGVVYDLFECLTQNLENAGLNNVPMFFISPVADSSLAYSNILAEWLSSAKQNKVYLPDDPFPHAFYLRNNKLKHYNHVFSEGFSKDFRQPCVVFCGHPSLRFGDAVHFIEMWGNNPNNSIIFTEPDFPYLQVLAPFQPLAMKAFYCPIDTSLNYQQANKLIKELKPNVLVIPEAYTKPHPSAPNLFIEQPDKKIITFKCGEIIRLPLKRKLDRIYITSELAQKISPKEVAAGVTFSTLTGVLQVKDKVHCIQPCADSVKDETISSNSAPTKEDVLKNVKYEYGSIDVDAVMKKLAQDGFSNIKLDRTGGALTLNLVNEDTVIKFEDNETHIICGGKPTTRLKLRDTIMKCLQSF</sequence>
<keyword id="KW-0002">3D-structure</keyword>
<keyword id="KW-0963">Cytoplasm</keyword>
<keyword id="KW-0539">Nucleus</keyword>
<keyword id="KW-1185">Reference proteome</keyword>
<dbReference type="EMBL" id="AE014296">
    <property type="protein sequence ID" value="AAF49538.2"/>
    <property type="molecule type" value="Genomic_DNA"/>
</dbReference>
<dbReference type="EMBL" id="AY058574">
    <property type="protein sequence ID" value="AAL13803.1"/>
    <property type="molecule type" value="mRNA"/>
</dbReference>
<dbReference type="RefSeq" id="NP_648838.3">
    <property type="nucleotide sequence ID" value="NM_140581.4"/>
</dbReference>
<dbReference type="PDB" id="7SN8">
    <property type="method" value="EM"/>
    <property type="resolution" value="2.74 A"/>
    <property type="chains" value="I=1-654"/>
</dbReference>
<dbReference type="PDBsum" id="7SN8"/>
<dbReference type="EMDB" id="EMD-25214"/>
<dbReference type="SMR" id="Q95TS5"/>
<dbReference type="FunCoup" id="Q95TS5">
    <property type="interactions" value="1791"/>
</dbReference>
<dbReference type="IntAct" id="Q95TS5">
    <property type="interactions" value="5"/>
</dbReference>
<dbReference type="STRING" id="7227.FBpp0075250"/>
<dbReference type="PaxDb" id="7227-FBpp0075250"/>
<dbReference type="DNASU" id="39763"/>
<dbReference type="EnsemblMetazoa" id="FBtr0075495">
    <property type="protein sequence ID" value="FBpp0075250"/>
    <property type="gene ID" value="FBgn0036570"/>
</dbReference>
<dbReference type="GeneID" id="39763"/>
<dbReference type="KEGG" id="dme:Dmel_CG5222"/>
<dbReference type="UCSC" id="CG5222-RA">
    <property type="organism name" value="d. melanogaster"/>
</dbReference>
<dbReference type="AGR" id="FB:FBgn0036570"/>
<dbReference type="CTD" id="55756"/>
<dbReference type="FlyBase" id="FBgn0036570">
    <property type="gene designation" value="IntS9"/>
</dbReference>
<dbReference type="VEuPathDB" id="VectorBase:FBgn0036570"/>
<dbReference type="eggNOG" id="KOG1138">
    <property type="taxonomic scope" value="Eukaryota"/>
</dbReference>
<dbReference type="GeneTree" id="ENSGT00390000001445"/>
<dbReference type="HOGENOM" id="CLU_023159_1_0_1"/>
<dbReference type="InParanoid" id="Q95TS5"/>
<dbReference type="OMA" id="AMKAVHC"/>
<dbReference type="OrthoDB" id="5600060at2759"/>
<dbReference type="PhylomeDB" id="Q95TS5"/>
<dbReference type="Reactome" id="R-DME-6807505">
    <property type="pathway name" value="RNA polymerase II transcribes snRNA genes"/>
</dbReference>
<dbReference type="BioGRID-ORCS" id="39763">
    <property type="hits" value="0 hits in 1 CRISPR screen"/>
</dbReference>
<dbReference type="GenomeRNAi" id="39763"/>
<dbReference type="PRO" id="PR:Q95TS5"/>
<dbReference type="Proteomes" id="UP000000803">
    <property type="component" value="Chromosome 3L"/>
</dbReference>
<dbReference type="Bgee" id="FBgn0036570">
    <property type="expression patterns" value="Expressed in adult Malpighian tubule principal cell of lower segment in Malpighian tubule and 12 other cell types or tissues"/>
</dbReference>
<dbReference type="ExpressionAtlas" id="Q95TS5">
    <property type="expression patterns" value="baseline and differential"/>
</dbReference>
<dbReference type="GO" id="GO:0005829">
    <property type="term" value="C:cytosol"/>
    <property type="evidence" value="ECO:0000314"/>
    <property type="project" value="FlyBase"/>
</dbReference>
<dbReference type="GO" id="GO:0160232">
    <property type="term" value="C:INTAC complex"/>
    <property type="evidence" value="ECO:0000314"/>
    <property type="project" value="UniProtKB"/>
</dbReference>
<dbReference type="GO" id="GO:0032039">
    <property type="term" value="C:integrator complex"/>
    <property type="evidence" value="ECO:0000314"/>
    <property type="project" value="UniProtKB"/>
</dbReference>
<dbReference type="GO" id="GO:0005634">
    <property type="term" value="C:nucleus"/>
    <property type="evidence" value="ECO:0000314"/>
    <property type="project" value="FlyBase"/>
</dbReference>
<dbReference type="GO" id="GO:0000822">
    <property type="term" value="F:inositol hexakisphosphate binding"/>
    <property type="evidence" value="ECO:0000314"/>
    <property type="project" value="UniProtKB"/>
</dbReference>
<dbReference type="GO" id="GO:0030514">
    <property type="term" value="P:negative regulation of BMP signaling pathway"/>
    <property type="evidence" value="ECO:0000315"/>
    <property type="project" value="FlyBase"/>
</dbReference>
<dbReference type="GO" id="GO:0160240">
    <property type="term" value="P:RNA polymerase II transcription initiation surveillance"/>
    <property type="evidence" value="ECO:0000314"/>
    <property type="project" value="UniProtKB"/>
</dbReference>
<dbReference type="GO" id="GO:0034472">
    <property type="term" value="P:snRNA 3'-end processing"/>
    <property type="evidence" value="ECO:0000314"/>
    <property type="project" value="FlyBase"/>
</dbReference>
<dbReference type="GO" id="GO:0016180">
    <property type="term" value="P:snRNA processing"/>
    <property type="evidence" value="ECO:0000250"/>
    <property type="project" value="FlyBase"/>
</dbReference>
<dbReference type="FunFam" id="3.40.50.10890:FF:000003">
    <property type="entry name" value="Integrator complex subunit 9"/>
    <property type="match status" value="1"/>
</dbReference>
<dbReference type="FunFam" id="3.60.15.10:FF:000056">
    <property type="entry name" value="integrator complex subunit 9"/>
    <property type="match status" value="1"/>
</dbReference>
<dbReference type="Gene3D" id="3.40.50.10890">
    <property type="match status" value="1"/>
</dbReference>
<dbReference type="Gene3D" id="3.60.15.10">
    <property type="entry name" value="Ribonuclease Z/Hydroxyacylglutathione hydrolase-like"/>
    <property type="match status" value="1"/>
</dbReference>
<dbReference type="InterPro" id="IPR022712">
    <property type="entry name" value="Beta_Casp"/>
</dbReference>
<dbReference type="InterPro" id="IPR027074">
    <property type="entry name" value="Integrator_9su"/>
</dbReference>
<dbReference type="InterPro" id="IPR048660">
    <property type="entry name" value="IntS9-like_C"/>
</dbReference>
<dbReference type="InterPro" id="IPR001279">
    <property type="entry name" value="Metallo-B-lactamas"/>
</dbReference>
<dbReference type="InterPro" id="IPR036866">
    <property type="entry name" value="RibonucZ/Hydroxyglut_hydro"/>
</dbReference>
<dbReference type="PANTHER" id="PTHR46094">
    <property type="entry name" value="INTEGRATOR COMPLEX SUBUNIT 9"/>
    <property type="match status" value="1"/>
</dbReference>
<dbReference type="PANTHER" id="PTHR46094:SF1">
    <property type="entry name" value="INTEGRATOR COMPLEX SUBUNIT 9"/>
    <property type="match status" value="1"/>
</dbReference>
<dbReference type="Pfam" id="PF10996">
    <property type="entry name" value="Beta-Casp"/>
    <property type="match status" value="1"/>
</dbReference>
<dbReference type="Pfam" id="PF21382">
    <property type="entry name" value="IntS9_C"/>
    <property type="match status" value="1"/>
</dbReference>
<dbReference type="Pfam" id="PF16661">
    <property type="entry name" value="Lactamase_B_6"/>
    <property type="match status" value="1"/>
</dbReference>
<dbReference type="SMART" id="SM01027">
    <property type="entry name" value="Beta-Casp"/>
    <property type="match status" value="1"/>
</dbReference>
<dbReference type="SUPFAM" id="SSF56281">
    <property type="entry name" value="Metallo-hydrolase/oxidoreductase"/>
    <property type="match status" value="1"/>
</dbReference>